<sequence length="1276" mass="140926">MEFEEDFSGRKDKNFLKMGRKSKKEKKEKKPVVSVFTMFRYAGWLDRLYMLVGTLAAIIHGVALPLMMLVFGDMTDSFASVGNIPTNATNNATQVNASDIFGKLEEEMTTYAYYYTGIGAGVLIVAYIQVSFWCLAAGRQIHKIRQKFFHAIMNQEIGWFDVHDVGELNTRLTDDVSKINEGIGDKIGMFFQAMATFFGGFIIGFTRGWKLTLVILAISPVLGLSAGIWAKILSSFTDKELQAYAKAGAVAEEVLAAIRTVIAFGGQKKELERYNNNLEEAKRLGIKKAITANISMGAAFLLIYASYALAFWYGTSLVISKEYSIGQVLTVFFAVLIGAFSIGQASPNIEAFANARGAAYEIFNIIDNKPSIDSFSKNGYKPDNIKGNLEFKNIHFSYPSRKDVQILKGLNLKVQSGQTVALVGNSGCGKSTTVQLLQRLYDPTEGVVSIDGQDIRTINVRYLREIIGVVSQEPVLFATTIAENIRYGRENVTMDEIEKAVKEANAYDFIMKLPHKFDTLVGERGAQLSGGQKQRIAIARALVRNPKILLLDEATSALDTESEAVVQAALDKAREGRTTIVIAHRLSTVRNADIIAGFDGGVIVEQGNHEELMREKGIYFKLVMTQTAGNEIELGNEVGESKNEIDNLDMSSKDSASSLIRRRSTRRSIRGPHDQDRKLSTKEALDEDVPPISFWRILKLNSSEWPYFVVGIFCAIVNGALQPAFSIIFSKVVGVFTRNTDDETKRHDSNLFSLLFLILGVISFITFFLQGFTFGKAGEILTKRLRYMVFKSMLRQDVSWFDNPKNTTGALTTRLANDAGQVKGATGARLAVITQNIANLGTGIIISLIYGWQLTLLLLAIVPIIAIAGVVEMKMLSGQALKDKKELEGSGKIATEAIENFRTVVSLTREQKFENMYAQSLQIPYRNALKKAHVFGITFSFTQAMMYFSYAACFRFGAYLVARELMTFENVLLVFSAIVFGAMAVGQVSSFAPDYAKAKVSASHIIMIIEKVPSIDSYSTGGLKPNTLEGNVKFNEVVFNYPTRPDIPVLQGLNLEVKKGQTLALVGSSGCGKSTVVQLLERFYDPMAGTVFLDGKEVNQLNVQWLRAHLGIVSQEPILFDCSIAENIAYGDNSRVVSQDEIERAAKEANIHQFIESLPDKYNTRVGDKGTQLSGGQKQRIAIARALVRQPHILLLDEATSALDTESEKVVQEALDKAREGRTCIVIAHRLSTIQNADLIVVIQNGKVKEHGTHQQLLAQKGIYFSMVSVQAGAKR</sequence>
<comment type="function">
    <text evidence="3">Translocates drugs and phospholipids across the membrane. Catalyzes the flop of phospholipids from the cytoplasmic to the exoplasmic leaflet of the apical membrane. Participates mainly to the flop of phosphatidylcholine, phosphatidylethanolamine, beta-D-glucosylceramides and sphingomyelins. Energy-dependent efflux pump responsible for decreased drug accumulation in multidrug-resistant cells.</text>
</comment>
<comment type="catalytic activity">
    <reaction evidence="3">
        <text>ATP + H2O + xenobioticSide 1 = ADP + phosphate + xenobioticSide 2.</text>
        <dbReference type="EC" id="7.6.2.2"/>
    </reaction>
</comment>
<comment type="catalytic activity">
    <reaction evidence="3">
        <text>ATP + H2O + phospholipidSide 1 = ADP + phosphate + phospholipidSide 2.</text>
        <dbReference type="EC" id="7.6.2.1"/>
    </reaction>
</comment>
<comment type="catalytic activity">
    <reaction evidence="3">
        <text>a 1,2-diacyl-sn-glycero-3-phosphoethanolamine(in) + ATP + H2O = a 1,2-diacyl-sn-glycero-3-phosphoethanolamine(out) + ADP + phosphate + H(+)</text>
        <dbReference type="Rhea" id="RHEA:36439"/>
        <dbReference type="ChEBI" id="CHEBI:15377"/>
        <dbReference type="ChEBI" id="CHEBI:15378"/>
        <dbReference type="ChEBI" id="CHEBI:30616"/>
        <dbReference type="ChEBI" id="CHEBI:43474"/>
        <dbReference type="ChEBI" id="CHEBI:64612"/>
        <dbReference type="ChEBI" id="CHEBI:456216"/>
    </reaction>
</comment>
<comment type="catalytic activity">
    <reaction evidence="3">
        <text>a 1,2-diacyl-sn-glycero-3-phosphocholine(out) + ATP + H2O = a 1,2-diacyl-sn-glycero-3-phosphocholine(in) + ADP + phosphate + H(+)</text>
        <dbReference type="Rhea" id="RHEA:38583"/>
        <dbReference type="ChEBI" id="CHEBI:15377"/>
        <dbReference type="ChEBI" id="CHEBI:15378"/>
        <dbReference type="ChEBI" id="CHEBI:30616"/>
        <dbReference type="ChEBI" id="CHEBI:43474"/>
        <dbReference type="ChEBI" id="CHEBI:57643"/>
        <dbReference type="ChEBI" id="CHEBI:456216"/>
    </reaction>
</comment>
<comment type="catalytic activity">
    <reaction evidence="3">
        <text>a beta-D-glucosyl-(1&lt;-&gt;1')-N-acylsphing-4-enine(in) + ATP + H2O = a beta-D-glucosyl-(1&lt;-&gt;1')-N-acylsphing-4-enine(out) + ADP + phosphate + H(+)</text>
        <dbReference type="Rhea" id="RHEA:38943"/>
        <dbReference type="ChEBI" id="CHEBI:15377"/>
        <dbReference type="ChEBI" id="CHEBI:15378"/>
        <dbReference type="ChEBI" id="CHEBI:22801"/>
        <dbReference type="ChEBI" id="CHEBI:30616"/>
        <dbReference type="ChEBI" id="CHEBI:43474"/>
        <dbReference type="ChEBI" id="CHEBI:456216"/>
    </reaction>
</comment>
<comment type="catalytic activity">
    <reaction evidence="3">
        <text>a sphingomyelin(in) + ATP + H2O = a sphingomyelin(out) + ADP + phosphate + H(+)</text>
        <dbReference type="Rhea" id="RHEA:38903"/>
        <dbReference type="ChEBI" id="CHEBI:15377"/>
        <dbReference type="ChEBI" id="CHEBI:15378"/>
        <dbReference type="ChEBI" id="CHEBI:17636"/>
        <dbReference type="ChEBI" id="CHEBI:30616"/>
        <dbReference type="ChEBI" id="CHEBI:43474"/>
        <dbReference type="ChEBI" id="CHEBI:456216"/>
    </reaction>
</comment>
<comment type="activity regulation">
    <text evidence="3">Translocase activity is inhibited by verapamil and is sensitive to energy depletion. C1orf115 regulates drug efflux through modulation of ABCB1 localization and activity.</text>
</comment>
<comment type="subunit">
    <text evidence="3">Interacts with PSMB5. Found in a complex with ABCB1, TFPI2 and PPP2R3C; leading to the dephosphorylation of ABCB1.</text>
</comment>
<comment type="subcellular location">
    <subcellularLocation>
        <location evidence="3">Cell membrane</location>
        <topology evidence="6">Multi-pass membrane protein</topology>
    </subcellularLocation>
    <subcellularLocation>
        <location evidence="3">Apical cell membrane</location>
    </subcellularLocation>
    <subcellularLocation>
        <location evidence="3">Cytoplasm</location>
    </subcellularLocation>
    <text evidence="3">ABCB1 localization is influenced by C1orf115 expression levels (plasma membrane versus cytoplasm).</text>
</comment>
<comment type="tissue specificity">
    <text evidence="8">Expressed at a higher level in intestines than in kidney and liver.</text>
</comment>
<comment type="miscellaneous">
    <text>PGP isoforms differ in their drug transport capabilities: PGP1 and PGP2 can mediate MDR, while PGP3 apparently cannot.</text>
</comment>
<comment type="similarity">
    <text evidence="9">Belongs to the ABC transporter superfamily. ABCB family. Multidrug resistance exporter (TC 3.A.1.201) subfamily.</text>
</comment>
<comment type="sequence caution" evidence="9">
    <conflict type="erroneous gene model prediction">
        <sequence resource="EMBL-CDS" id="EGW07208"/>
    </conflict>
</comment>
<protein>
    <recommendedName>
        <fullName evidence="3">ATP-dependent translocase ABCB1</fullName>
    </recommendedName>
    <alternativeName>
        <fullName>ATP-binding cassette sub-family B member 1</fullName>
    </alternativeName>
    <alternativeName>
        <fullName>Multidrug resistance protein 1</fullName>
        <ecNumber>7.6.2.2</ecNumber>
    </alternativeName>
    <alternativeName>
        <fullName>P-glycoprotein 1</fullName>
    </alternativeName>
    <alternativeName>
        <fullName evidence="9">Phospholipid transporter ABCB1</fullName>
        <ecNumber evidence="3">7.6.2.1</ecNumber>
    </alternativeName>
    <cdAntigenName>CD243</cdAntigenName>
</protein>
<gene>
    <name evidence="3" type="primary">ABCB1</name>
    <name type="synonym">PGP1</name>
    <name type="synonym">PGY1</name>
</gene>
<keyword id="KW-0002">3D-structure</keyword>
<keyword id="KW-0067">ATP-binding</keyword>
<keyword id="KW-1003">Cell membrane</keyword>
<keyword id="KW-0963">Cytoplasm</keyword>
<keyword id="KW-0325">Glycoprotein</keyword>
<keyword id="KW-0445">Lipid transport</keyword>
<keyword id="KW-0472">Membrane</keyword>
<keyword id="KW-0547">Nucleotide-binding</keyword>
<keyword id="KW-0597">Phosphoprotein</keyword>
<keyword id="KW-1185">Reference proteome</keyword>
<keyword id="KW-0677">Repeat</keyword>
<keyword id="KW-1278">Translocase</keyword>
<keyword id="KW-0812">Transmembrane</keyword>
<keyword id="KW-1133">Transmembrane helix</keyword>
<keyword id="KW-0813">Transport</keyword>
<proteinExistence type="evidence at protein level"/>
<name>MDR1_CRIGR</name>
<reference key="1">
    <citation type="journal article" date="1991" name="DNA Seq.">
        <title>Complete cDNA sequences encoding the Chinese hamster P-glycoprotein gene family.</title>
        <authorList>
            <person name="Endicott J.A."/>
            <person name="Sarangi F."/>
            <person name="Ling V."/>
        </authorList>
    </citation>
    <scope>NUCLEOTIDE SEQUENCE [MRNA]</scope>
</reference>
<reference key="2">
    <citation type="journal article" date="1991" name="J. Biol. Chem.">
        <title>Full length and alternatively spliced pgp1 transcripts in multidrug-resistant Chinese hamster lung cells.</title>
        <authorList>
            <person name="Devine S.E."/>
            <person name="Hussain A."/>
            <person name="Davide J.P."/>
            <person name="Melera P.W."/>
        </authorList>
    </citation>
    <scope>NUCLEOTIDE SEQUENCE [MRNA]</scope>
</reference>
<reference key="3">
    <citation type="journal article" date="2011" name="Nat. Biotechnol.">
        <title>The genomic sequence of the Chinese hamster ovary (CHO)-K1 cell line.</title>
        <authorList>
            <person name="Xu X."/>
            <person name="Nagarajan H."/>
            <person name="Lewis N.E."/>
            <person name="Pan S."/>
            <person name="Cai Z."/>
            <person name="Liu X."/>
            <person name="Chen W."/>
            <person name="Xie M."/>
            <person name="Wang W."/>
            <person name="Hammond S."/>
            <person name="Andersen M.R."/>
            <person name="Neff N."/>
            <person name="Passarelli B."/>
            <person name="Koh W."/>
            <person name="Fan H.C."/>
            <person name="Wang J."/>
            <person name="Gui Y."/>
            <person name="Lee K.H."/>
            <person name="Betenbaugh M.J."/>
            <person name="Quake S.R."/>
            <person name="Famili I."/>
            <person name="Palsson B.O."/>
            <person name="Wang J."/>
        </authorList>
    </citation>
    <scope>NUCLEOTIDE SEQUENCE [LARGE SCALE GENOMIC DNA]</scope>
</reference>
<reference key="4">
    <citation type="journal article" date="1991" name="Cell Growth Differ.">
        <title>Analysis of the Chinese hamster P-glycoprotein/multidrug resistance gene pgp1 reveals that the AP-1 site is essential for full promoter activity.</title>
        <authorList>
            <person name="Teeter L.D."/>
            <person name="Eckersberg T."/>
            <person name="Tsai Y."/>
            <person name="Kuo M.T."/>
        </authorList>
    </citation>
    <scope>NUCLEOTIDE SEQUENCE [GENOMIC DNA] OF 1-21</scope>
    <scope>TISSUE SPECIFICITY</scope>
</reference>
<reference key="5">
    <citation type="journal article" date="1993" name="Biochim. Biophys. Acta">
        <title>Structural and functional analysis of 5' flanking and intron 1 sequences of the hamster P-glycoprotein pgp1 and pgp2 genes.</title>
        <authorList>
            <person name="Zastawny R.L."/>
            <person name="Ling V."/>
        </authorList>
    </citation>
    <scope>NUCLEOTIDE SEQUENCE [GENOMIC DNA] OF 1-21</scope>
    <source>
        <tissue>Ovary</tissue>
    </source>
</reference>
<reference key="6">
    <citation type="journal article" date="1987" name="Mol. Cell. Biol.">
        <title>Simultaneous expression of two P-glycoprotein genes in drug-sensitive Chinese hamster ovary cells.</title>
        <authorList>
            <person name="Endicott J.A."/>
            <person name="Juranka P.F."/>
            <person name="Sarangi F."/>
            <person name="Gerlach J.H."/>
            <person name="Deuchars K.L."/>
            <person name="Ling V."/>
        </authorList>
    </citation>
    <scope>NUCLEOTIDE SEQUENCE [MRNA] OF 706-1276</scope>
</reference>
<dbReference type="EC" id="7.6.2.2"/>
<dbReference type="EC" id="7.6.2.1" evidence="3"/>
<dbReference type="EMBL" id="M60040">
    <property type="protein sequence ID" value="AAA68883.1"/>
    <property type="molecule type" value="mRNA"/>
</dbReference>
<dbReference type="EMBL" id="M59253">
    <property type="protein sequence ID" value="AAA37004.1"/>
    <property type="molecule type" value="mRNA"/>
</dbReference>
<dbReference type="EMBL" id="JH000645">
    <property type="protein sequence ID" value="EGW07208.1"/>
    <property type="status" value="ALT_SEQ"/>
    <property type="molecule type" value="Genomic_DNA"/>
</dbReference>
<dbReference type="EMBL" id="AH003795">
    <property type="protein sequence ID" value="AAP32275.1"/>
    <property type="molecule type" value="Genomic_DNA"/>
</dbReference>
<dbReference type="EMBL" id="L03286">
    <property type="status" value="NOT_ANNOTATED_CDS"/>
    <property type="molecule type" value="Genomic_DNA"/>
</dbReference>
<dbReference type="EMBL" id="M17897">
    <property type="protein sequence ID" value="AAA37006.1"/>
    <property type="molecule type" value="mRNA"/>
</dbReference>
<dbReference type="PIR" id="A38696">
    <property type="entry name" value="DVHY1C"/>
</dbReference>
<dbReference type="RefSeq" id="NP_001230917.1">
    <property type="nucleotide sequence ID" value="NM_001243988.1"/>
</dbReference>
<dbReference type="PDB" id="1MVU">
    <property type="method" value="X-ray"/>
    <property type="resolution" value="1.78 A"/>
    <property type="chains" value="P=1210-1222"/>
</dbReference>
<dbReference type="PDB" id="2AP2">
    <property type="method" value="X-ray"/>
    <property type="resolution" value="2.40 A"/>
    <property type="chains" value="P/Q=1210-1223"/>
</dbReference>
<dbReference type="PDBsum" id="1MVU"/>
<dbReference type="PDBsum" id="2AP2"/>
<dbReference type="SMR" id="P21448"/>
<dbReference type="FunCoup" id="P21448">
    <property type="interactions" value="125"/>
</dbReference>
<dbReference type="STRING" id="10029.P21448"/>
<dbReference type="GlyCosmos" id="P21448">
    <property type="glycosylation" value="3 sites, No reported glycans"/>
</dbReference>
<dbReference type="PaxDb" id="10029-NP_001230917.1"/>
<dbReference type="ABCD" id="P21448">
    <property type="antibodies" value="2 sequenced antibodies"/>
</dbReference>
<dbReference type="Ensembl" id="ENSCGRT00001017943.1">
    <property type="protein sequence ID" value="ENSCGRP00001013706.1"/>
    <property type="gene ID" value="ENSCGRG00001014754.1"/>
</dbReference>
<dbReference type="GeneID" id="100682536"/>
<dbReference type="KEGG" id="cge:100682536"/>
<dbReference type="CTD" id="5243"/>
<dbReference type="eggNOG" id="KOG0055">
    <property type="taxonomic scope" value="Eukaryota"/>
</dbReference>
<dbReference type="GeneTree" id="ENSGT00940000155287"/>
<dbReference type="InParanoid" id="P21448"/>
<dbReference type="OrthoDB" id="6500128at2759"/>
<dbReference type="EvolutionaryTrace" id="P21448"/>
<dbReference type="Proteomes" id="UP000001075">
    <property type="component" value="Unassembled WGS sequence"/>
</dbReference>
<dbReference type="Proteomes" id="UP000694386">
    <property type="component" value="Unplaced"/>
</dbReference>
<dbReference type="Proteomes" id="UP001108280">
    <property type="component" value="Chromosome 1"/>
</dbReference>
<dbReference type="GO" id="GO:0016324">
    <property type="term" value="C:apical plasma membrane"/>
    <property type="evidence" value="ECO:0007669"/>
    <property type="project" value="UniProtKB-SubCell"/>
</dbReference>
<dbReference type="GO" id="GO:0005737">
    <property type="term" value="C:cytoplasm"/>
    <property type="evidence" value="ECO:0000250"/>
    <property type="project" value="UniProtKB"/>
</dbReference>
<dbReference type="GO" id="GO:0046581">
    <property type="term" value="C:intercellular canaliculus"/>
    <property type="evidence" value="ECO:0007669"/>
    <property type="project" value="Ensembl"/>
</dbReference>
<dbReference type="GO" id="GO:0005743">
    <property type="term" value="C:mitochondrial inner membrane"/>
    <property type="evidence" value="ECO:0007669"/>
    <property type="project" value="TreeGrafter"/>
</dbReference>
<dbReference type="GO" id="GO:0015421">
    <property type="term" value="F:ABC-type oligopeptide transporter activity"/>
    <property type="evidence" value="ECO:0007669"/>
    <property type="project" value="TreeGrafter"/>
</dbReference>
<dbReference type="GO" id="GO:0008559">
    <property type="term" value="F:ABC-type xenobiotic transporter activity"/>
    <property type="evidence" value="ECO:0007669"/>
    <property type="project" value="UniProtKB-EC"/>
</dbReference>
<dbReference type="GO" id="GO:0005524">
    <property type="term" value="F:ATP binding"/>
    <property type="evidence" value="ECO:0007669"/>
    <property type="project" value="UniProtKB-KW"/>
</dbReference>
<dbReference type="GO" id="GO:0016887">
    <property type="term" value="F:ATP hydrolysis activity"/>
    <property type="evidence" value="ECO:0007669"/>
    <property type="project" value="Ensembl"/>
</dbReference>
<dbReference type="GO" id="GO:0099038">
    <property type="term" value="F:ceramide floppase activity"/>
    <property type="evidence" value="ECO:0007669"/>
    <property type="project" value="Ensembl"/>
</dbReference>
<dbReference type="GO" id="GO:0015562">
    <property type="term" value="F:efflux transmembrane transporter activity"/>
    <property type="evidence" value="ECO:0007669"/>
    <property type="project" value="Ensembl"/>
</dbReference>
<dbReference type="GO" id="GO:0140328">
    <property type="term" value="F:floppase activity"/>
    <property type="evidence" value="ECO:0000250"/>
    <property type="project" value="UniProtKB"/>
</dbReference>
<dbReference type="GO" id="GO:0090554">
    <property type="term" value="F:phosphatidylcholine floppase activity"/>
    <property type="evidence" value="ECO:0007669"/>
    <property type="project" value="Ensembl"/>
</dbReference>
<dbReference type="GO" id="GO:0090555">
    <property type="term" value="F:phosphatidylethanolamine flippase activity"/>
    <property type="evidence" value="ECO:0007669"/>
    <property type="project" value="Ensembl"/>
</dbReference>
<dbReference type="GO" id="GO:0090374">
    <property type="term" value="P:oligopeptide export from mitochondrion"/>
    <property type="evidence" value="ECO:0007669"/>
    <property type="project" value="TreeGrafter"/>
</dbReference>
<dbReference type="GO" id="GO:0045332">
    <property type="term" value="P:phospholipid translocation"/>
    <property type="evidence" value="ECO:0007669"/>
    <property type="project" value="Ensembl"/>
</dbReference>
<dbReference type="GO" id="GO:0046865">
    <property type="term" value="P:terpenoid transport"/>
    <property type="evidence" value="ECO:0007669"/>
    <property type="project" value="Ensembl"/>
</dbReference>
<dbReference type="GO" id="GO:1990961">
    <property type="term" value="P:xenobiotic detoxification by transmembrane export across the plasma membrane"/>
    <property type="evidence" value="ECO:0007669"/>
    <property type="project" value="Ensembl"/>
</dbReference>
<dbReference type="GO" id="GO:1990962">
    <property type="term" value="P:xenobiotic transport across blood-brain barrier"/>
    <property type="evidence" value="ECO:0007669"/>
    <property type="project" value="Ensembl"/>
</dbReference>
<dbReference type="CDD" id="cd18558">
    <property type="entry name" value="ABC_6TM_Pgp_ABCB1"/>
    <property type="match status" value="1"/>
</dbReference>
<dbReference type="CDD" id="cd18578">
    <property type="entry name" value="ABC_6TM_Pgp_ABCB1_D2_like"/>
    <property type="match status" value="1"/>
</dbReference>
<dbReference type="CDD" id="cd03249">
    <property type="entry name" value="ABC_MTABC3_MDL1_MDL2"/>
    <property type="match status" value="2"/>
</dbReference>
<dbReference type="FunFam" id="1.20.1560.10:FF:000043">
    <property type="entry name" value="Multidrug resistance protein 1A"/>
    <property type="match status" value="2"/>
</dbReference>
<dbReference type="FunFam" id="3.40.50.300:FF:000479">
    <property type="entry name" value="Multidrug resistance protein 1A"/>
    <property type="match status" value="2"/>
</dbReference>
<dbReference type="Gene3D" id="1.20.1560.10">
    <property type="entry name" value="ABC transporter type 1, transmembrane domain"/>
    <property type="match status" value="1"/>
</dbReference>
<dbReference type="Gene3D" id="3.40.50.300">
    <property type="entry name" value="P-loop containing nucleotide triphosphate hydrolases"/>
    <property type="match status" value="2"/>
</dbReference>
<dbReference type="InterPro" id="IPR003593">
    <property type="entry name" value="AAA+_ATPase"/>
</dbReference>
<dbReference type="InterPro" id="IPR011527">
    <property type="entry name" value="ABC1_TM_dom"/>
</dbReference>
<dbReference type="InterPro" id="IPR036640">
    <property type="entry name" value="ABC1_TM_sf"/>
</dbReference>
<dbReference type="InterPro" id="IPR003439">
    <property type="entry name" value="ABC_transporter-like_ATP-bd"/>
</dbReference>
<dbReference type="InterPro" id="IPR017871">
    <property type="entry name" value="ABC_transporter-like_CS"/>
</dbReference>
<dbReference type="InterPro" id="IPR027417">
    <property type="entry name" value="P-loop_NTPase"/>
</dbReference>
<dbReference type="InterPro" id="IPR039421">
    <property type="entry name" value="Type_1_exporter"/>
</dbReference>
<dbReference type="PANTHER" id="PTHR43394:SF28">
    <property type="entry name" value="ATP-BINDING CASSETTE SUBFAMILY B MEMBER 1"/>
    <property type="match status" value="1"/>
</dbReference>
<dbReference type="PANTHER" id="PTHR43394">
    <property type="entry name" value="ATP-DEPENDENT PERMEASE MDL1, MITOCHONDRIAL"/>
    <property type="match status" value="1"/>
</dbReference>
<dbReference type="Pfam" id="PF00664">
    <property type="entry name" value="ABC_membrane"/>
    <property type="match status" value="2"/>
</dbReference>
<dbReference type="Pfam" id="PF00005">
    <property type="entry name" value="ABC_tran"/>
    <property type="match status" value="2"/>
</dbReference>
<dbReference type="SMART" id="SM00382">
    <property type="entry name" value="AAA"/>
    <property type="match status" value="2"/>
</dbReference>
<dbReference type="SUPFAM" id="SSF90123">
    <property type="entry name" value="ABC transporter transmembrane region"/>
    <property type="match status" value="2"/>
</dbReference>
<dbReference type="SUPFAM" id="SSF52540">
    <property type="entry name" value="P-loop containing nucleoside triphosphate hydrolases"/>
    <property type="match status" value="2"/>
</dbReference>
<dbReference type="PROSITE" id="PS50929">
    <property type="entry name" value="ABC_TM1F"/>
    <property type="match status" value="2"/>
</dbReference>
<dbReference type="PROSITE" id="PS00211">
    <property type="entry name" value="ABC_TRANSPORTER_1"/>
    <property type="match status" value="2"/>
</dbReference>
<dbReference type="PROSITE" id="PS50893">
    <property type="entry name" value="ABC_TRANSPORTER_2"/>
    <property type="match status" value="2"/>
</dbReference>
<evidence type="ECO:0000250" key="1"/>
<evidence type="ECO:0000250" key="2">
    <source>
        <dbReference type="UniProtKB" id="P06795"/>
    </source>
</evidence>
<evidence type="ECO:0000250" key="3">
    <source>
        <dbReference type="UniProtKB" id="P08183"/>
    </source>
</evidence>
<evidence type="ECO:0000255" key="4"/>
<evidence type="ECO:0000255" key="5">
    <source>
        <dbReference type="PROSITE-ProRule" id="PRU00434"/>
    </source>
</evidence>
<evidence type="ECO:0000255" key="6">
    <source>
        <dbReference type="PROSITE-ProRule" id="PRU00441"/>
    </source>
</evidence>
<evidence type="ECO:0000256" key="7">
    <source>
        <dbReference type="SAM" id="MobiDB-lite"/>
    </source>
</evidence>
<evidence type="ECO:0000269" key="8">
    <source>
    </source>
</evidence>
<evidence type="ECO:0000305" key="9"/>
<evidence type="ECO:0007829" key="10">
    <source>
        <dbReference type="PDB" id="1MVU"/>
    </source>
</evidence>
<organism>
    <name type="scientific">Cricetulus griseus</name>
    <name type="common">Chinese hamster</name>
    <name type="synonym">Cricetulus barabensis griseus</name>
    <dbReference type="NCBI Taxonomy" id="10029"/>
    <lineage>
        <taxon>Eukaryota</taxon>
        <taxon>Metazoa</taxon>
        <taxon>Chordata</taxon>
        <taxon>Craniata</taxon>
        <taxon>Vertebrata</taxon>
        <taxon>Euteleostomi</taxon>
        <taxon>Mammalia</taxon>
        <taxon>Eutheria</taxon>
        <taxon>Euarchontoglires</taxon>
        <taxon>Glires</taxon>
        <taxon>Rodentia</taxon>
        <taxon>Myomorpha</taxon>
        <taxon>Muroidea</taxon>
        <taxon>Cricetidae</taxon>
        <taxon>Cricetinae</taxon>
        <taxon>Cricetulus</taxon>
    </lineage>
</organism>
<feature type="chain" id="PRO_0000093339" description="ATP-dependent translocase ABCB1">
    <location>
        <begin position="1"/>
        <end position="1276"/>
    </location>
</feature>
<feature type="topological domain" description="Cytoplasmic" evidence="1">
    <location>
        <begin position="1"/>
        <end position="43"/>
    </location>
</feature>
<feature type="transmembrane region" description="Helical" evidence="6">
    <location>
        <begin position="44"/>
        <end position="66"/>
    </location>
</feature>
<feature type="topological domain" description="Extracellular" evidence="1">
    <location>
        <begin position="67"/>
        <end position="113"/>
    </location>
</feature>
<feature type="transmembrane region" description="Helical" evidence="6">
    <location>
        <begin position="114"/>
        <end position="134"/>
    </location>
</feature>
<feature type="topological domain" description="Cytoplasmic" evidence="1">
    <location>
        <begin position="135"/>
        <end position="183"/>
    </location>
</feature>
<feature type="transmembrane region" description="Helical" evidence="6">
    <location>
        <begin position="184"/>
        <end position="205"/>
    </location>
</feature>
<feature type="topological domain" description="Extracellular" evidence="1">
    <location>
        <begin position="206"/>
        <end position="212"/>
    </location>
</feature>
<feature type="transmembrane region" description="Helical" evidence="6">
    <location>
        <begin position="213"/>
        <end position="233"/>
    </location>
</feature>
<feature type="topological domain" description="Cytoplasmic" evidence="1">
    <location>
        <begin position="234"/>
        <end position="291"/>
    </location>
</feature>
<feature type="transmembrane region" description="Helical" evidence="6">
    <location>
        <begin position="292"/>
        <end position="313"/>
    </location>
</feature>
<feature type="topological domain" description="Extracellular" evidence="1">
    <location>
        <begin position="314"/>
        <end position="327"/>
    </location>
</feature>
<feature type="transmembrane region" description="Helical" evidence="6">
    <location>
        <begin position="328"/>
        <end position="349"/>
    </location>
</feature>
<feature type="topological domain" description="Cytoplasmic" evidence="1">
    <location>
        <begin position="350"/>
        <end position="708"/>
    </location>
</feature>
<feature type="transmembrane region" description="Helical" evidence="6">
    <location>
        <begin position="709"/>
        <end position="729"/>
    </location>
</feature>
<feature type="topological domain" description="Extracellular" evidence="1">
    <location>
        <begin position="730"/>
        <end position="753"/>
    </location>
</feature>
<feature type="transmembrane region" description="Helical" evidence="6">
    <location>
        <begin position="754"/>
        <end position="774"/>
    </location>
</feature>
<feature type="topological domain" description="Cytoplasmic" evidence="1">
    <location>
        <begin position="775"/>
        <end position="829"/>
    </location>
</feature>
<feature type="transmembrane region" description="Helical" evidence="6">
    <location>
        <begin position="830"/>
        <end position="850"/>
    </location>
</feature>
<feature type="topological domain" description="Extracellular" evidence="1">
    <location>
        <position position="851"/>
    </location>
</feature>
<feature type="transmembrane region" description="Helical" evidence="6">
    <location>
        <begin position="852"/>
        <end position="871"/>
    </location>
</feature>
<feature type="topological domain" description="Cytoplasmic" evidence="1">
    <location>
        <begin position="872"/>
        <end position="931"/>
    </location>
</feature>
<feature type="transmembrane region" description="Helical" evidence="6">
    <location>
        <begin position="932"/>
        <end position="954"/>
    </location>
</feature>
<feature type="topological domain" description="Extracellular" evidence="1">
    <location>
        <begin position="955"/>
        <end position="970"/>
    </location>
</feature>
<feature type="transmembrane region" description="Helical" evidence="6">
    <location>
        <begin position="971"/>
        <end position="992"/>
    </location>
</feature>
<feature type="topological domain" description="Cytoplasmic" evidence="1">
    <location>
        <begin position="993"/>
        <end position="1276"/>
    </location>
</feature>
<feature type="domain" description="ABC transmembrane type-1 1" evidence="6">
    <location>
        <begin position="50"/>
        <end position="354"/>
    </location>
</feature>
<feature type="domain" description="ABC transporter 1" evidence="5">
    <location>
        <begin position="389"/>
        <end position="625"/>
    </location>
</feature>
<feature type="domain" description="ABC transmembrane type-1 2" evidence="6">
    <location>
        <begin position="708"/>
        <end position="997"/>
    </location>
</feature>
<feature type="domain" description="ABC transporter 2" evidence="5">
    <location>
        <begin position="1032"/>
        <end position="1270"/>
    </location>
</feature>
<feature type="region of interest" description="Disordered" evidence="7">
    <location>
        <begin position="653"/>
        <end position="682"/>
    </location>
</feature>
<feature type="compositionally biased region" description="Basic residues" evidence="7">
    <location>
        <begin position="660"/>
        <end position="670"/>
    </location>
</feature>
<feature type="compositionally biased region" description="Basic and acidic residues" evidence="7">
    <location>
        <begin position="671"/>
        <end position="682"/>
    </location>
</feature>
<feature type="binding site" evidence="5">
    <location>
        <begin position="424"/>
        <end position="431"/>
    </location>
    <ligand>
        <name>ATP</name>
        <dbReference type="ChEBI" id="CHEBI:30616"/>
        <label>1</label>
    </ligand>
</feature>
<feature type="binding site" evidence="5">
    <location>
        <begin position="1067"/>
        <end position="1074"/>
    </location>
    <ligand>
        <name>ATP</name>
        <dbReference type="ChEBI" id="CHEBI:30616"/>
        <label>2</label>
    </ligand>
</feature>
<feature type="modified residue" description="Phosphoserine" evidence="2">
    <location>
        <position position="657"/>
    </location>
</feature>
<feature type="glycosylation site" description="N-linked (GlcNAc...) asparagine" evidence="4">
    <location>
        <position position="87"/>
    </location>
</feature>
<feature type="glycosylation site" description="N-linked (GlcNAc...) asparagine" evidence="4">
    <location>
        <position position="91"/>
    </location>
</feature>
<feature type="glycosylation site" description="N-linked (GlcNAc...) asparagine" evidence="4">
    <location>
        <position position="96"/>
    </location>
</feature>
<feature type="sequence conflict" description="In Ref. 2; AAA37004." evidence="9" ref="2">
    <original>GA</original>
    <variation>AP</variation>
    <location>
        <begin position="338"/>
        <end position="339"/>
    </location>
</feature>
<feature type="helix" evidence="10">
    <location>
        <begin position="1211"/>
        <end position="1220"/>
    </location>
</feature>
<accession>P21448</accession>
<accession>G3HRY0</accession>
<accession>Q80W58</accession>